<comment type="function">
    <text evidence="1">ATP-dependent specificity component of the Clp protease. It directs the protease to specific substrates. Can perform chaperone functions in the absence of ClpP.</text>
</comment>
<comment type="subunit">
    <text evidence="1">Component of the ClpX-ClpP complex. Forms a hexameric ring that, in the presence of ATP, binds to fourteen ClpP subunits assembled into a disk-like structure with a central cavity, resembling the structure of eukaryotic proteasomes.</text>
</comment>
<comment type="similarity">
    <text evidence="1">Belongs to the ClpX chaperone family.</text>
</comment>
<proteinExistence type="inferred from homology"/>
<name>CLPX_PSEPG</name>
<accession>B0KJG7</accession>
<organism>
    <name type="scientific">Pseudomonas putida (strain GB-1)</name>
    <dbReference type="NCBI Taxonomy" id="76869"/>
    <lineage>
        <taxon>Bacteria</taxon>
        <taxon>Pseudomonadati</taxon>
        <taxon>Pseudomonadota</taxon>
        <taxon>Gammaproteobacteria</taxon>
        <taxon>Pseudomonadales</taxon>
        <taxon>Pseudomonadaceae</taxon>
        <taxon>Pseudomonas</taxon>
    </lineage>
</organism>
<gene>
    <name evidence="1" type="primary">clpX</name>
    <name type="ordered locus">PputGB1_1903</name>
</gene>
<feature type="chain" id="PRO_1000077168" description="ATP-dependent Clp protease ATP-binding subunit ClpX">
    <location>
        <begin position="1"/>
        <end position="427"/>
    </location>
</feature>
<feature type="domain" description="ClpX-type ZB" evidence="2">
    <location>
        <begin position="4"/>
        <end position="57"/>
    </location>
</feature>
<feature type="binding site" evidence="2">
    <location>
        <position position="16"/>
    </location>
    <ligand>
        <name>Zn(2+)</name>
        <dbReference type="ChEBI" id="CHEBI:29105"/>
    </ligand>
</feature>
<feature type="binding site" evidence="2">
    <location>
        <position position="19"/>
    </location>
    <ligand>
        <name>Zn(2+)</name>
        <dbReference type="ChEBI" id="CHEBI:29105"/>
    </ligand>
</feature>
<feature type="binding site" evidence="2">
    <location>
        <position position="38"/>
    </location>
    <ligand>
        <name>Zn(2+)</name>
        <dbReference type="ChEBI" id="CHEBI:29105"/>
    </ligand>
</feature>
<feature type="binding site" evidence="2">
    <location>
        <position position="41"/>
    </location>
    <ligand>
        <name>Zn(2+)</name>
        <dbReference type="ChEBI" id="CHEBI:29105"/>
    </ligand>
</feature>
<feature type="binding site" evidence="1">
    <location>
        <begin position="122"/>
        <end position="129"/>
    </location>
    <ligand>
        <name>ATP</name>
        <dbReference type="ChEBI" id="CHEBI:30616"/>
    </ligand>
</feature>
<evidence type="ECO:0000255" key="1">
    <source>
        <dbReference type="HAMAP-Rule" id="MF_00175"/>
    </source>
</evidence>
<evidence type="ECO:0000255" key="2">
    <source>
        <dbReference type="PROSITE-ProRule" id="PRU01250"/>
    </source>
</evidence>
<keyword id="KW-0067">ATP-binding</keyword>
<keyword id="KW-0143">Chaperone</keyword>
<keyword id="KW-0479">Metal-binding</keyword>
<keyword id="KW-0547">Nucleotide-binding</keyword>
<keyword id="KW-0862">Zinc</keyword>
<sequence>MTDTRNGEDSGKLLYCSFCGKSQHEVRKLIAGPSVFICDECVDLCNDIIREEVQEAQAESSAHKLPSPKEISGILDQYVIGQERAKKVLAVAVYNHYKRLNQRDKKGDEVELGKSNILLIGPTGSGKTLLAETLARLLNVPFTIADATTLTEAGYVGEDVENIIQKLLQKCDYDVEKAQMGIVYIDEIDKISRKSDNPSITRDVSGEGVQQALLKLIEGTVASVPPQGGRKHPQQEFLQVDTRNILFICGGAFSGLEKVIQNRSTKGGIGFGAEVRSKEEGKKVGESLREVEPDDLVKFGLIPEFVGRLPVLATLDELDEAALMQILTEPKNALTKQYAKLFEMESVDLEFRSDALKAVARKALERKTGARGLRSILEGVLLDTMYEIPSKKEVSKVVIDESVIEGTSQPLMIYENSEPQAKAAPDA</sequence>
<dbReference type="EMBL" id="CP000926">
    <property type="protein sequence ID" value="ABY97806.1"/>
    <property type="molecule type" value="Genomic_DNA"/>
</dbReference>
<dbReference type="RefSeq" id="WP_012271563.1">
    <property type="nucleotide sequence ID" value="NC_010322.1"/>
</dbReference>
<dbReference type="SMR" id="B0KJG7"/>
<dbReference type="KEGG" id="ppg:PputGB1_1903"/>
<dbReference type="eggNOG" id="COG1219">
    <property type="taxonomic scope" value="Bacteria"/>
</dbReference>
<dbReference type="HOGENOM" id="CLU_014218_8_2_6"/>
<dbReference type="Proteomes" id="UP000002157">
    <property type="component" value="Chromosome"/>
</dbReference>
<dbReference type="GO" id="GO:0009376">
    <property type="term" value="C:HslUV protease complex"/>
    <property type="evidence" value="ECO:0007669"/>
    <property type="project" value="TreeGrafter"/>
</dbReference>
<dbReference type="GO" id="GO:0005524">
    <property type="term" value="F:ATP binding"/>
    <property type="evidence" value="ECO:0007669"/>
    <property type="project" value="UniProtKB-UniRule"/>
</dbReference>
<dbReference type="GO" id="GO:0016887">
    <property type="term" value="F:ATP hydrolysis activity"/>
    <property type="evidence" value="ECO:0007669"/>
    <property type="project" value="InterPro"/>
</dbReference>
<dbReference type="GO" id="GO:0140662">
    <property type="term" value="F:ATP-dependent protein folding chaperone"/>
    <property type="evidence" value="ECO:0007669"/>
    <property type="project" value="InterPro"/>
</dbReference>
<dbReference type="GO" id="GO:0046983">
    <property type="term" value="F:protein dimerization activity"/>
    <property type="evidence" value="ECO:0007669"/>
    <property type="project" value="InterPro"/>
</dbReference>
<dbReference type="GO" id="GO:0051082">
    <property type="term" value="F:unfolded protein binding"/>
    <property type="evidence" value="ECO:0007669"/>
    <property type="project" value="UniProtKB-UniRule"/>
</dbReference>
<dbReference type="GO" id="GO:0008270">
    <property type="term" value="F:zinc ion binding"/>
    <property type="evidence" value="ECO:0007669"/>
    <property type="project" value="InterPro"/>
</dbReference>
<dbReference type="GO" id="GO:0051301">
    <property type="term" value="P:cell division"/>
    <property type="evidence" value="ECO:0007669"/>
    <property type="project" value="TreeGrafter"/>
</dbReference>
<dbReference type="GO" id="GO:0051603">
    <property type="term" value="P:proteolysis involved in protein catabolic process"/>
    <property type="evidence" value="ECO:0007669"/>
    <property type="project" value="TreeGrafter"/>
</dbReference>
<dbReference type="CDD" id="cd19497">
    <property type="entry name" value="RecA-like_ClpX"/>
    <property type="match status" value="1"/>
</dbReference>
<dbReference type="FunFam" id="1.10.8.60:FF:000002">
    <property type="entry name" value="ATP-dependent Clp protease ATP-binding subunit ClpX"/>
    <property type="match status" value="1"/>
</dbReference>
<dbReference type="FunFam" id="3.40.50.300:FF:000005">
    <property type="entry name" value="ATP-dependent Clp protease ATP-binding subunit ClpX"/>
    <property type="match status" value="1"/>
</dbReference>
<dbReference type="Gene3D" id="1.10.8.60">
    <property type="match status" value="1"/>
</dbReference>
<dbReference type="Gene3D" id="6.20.220.10">
    <property type="entry name" value="ClpX chaperone, C4-type zinc finger domain"/>
    <property type="match status" value="1"/>
</dbReference>
<dbReference type="Gene3D" id="3.40.50.300">
    <property type="entry name" value="P-loop containing nucleotide triphosphate hydrolases"/>
    <property type="match status" value="1"/>
</dbReference>
<dbReference type="HAMAP" id="MF_00175">
    <property type="entry name" value="ClpX"/>
    <property type="match status" value="1"/>
</dbReference>
<dbReference type="InterPro" id="IPR003593">
    <property type="entry name" value="AAA+_ATPase"/>
</dbReference>
<dbReference type="InterPro" id="IPR050052">
    <property type="entry name" value="ATP-dep_Clp_protease_ClpX"/>
</dbReference>
<dbReference type="InterPro" id="IPR003959">
    <property type="entry name" value="ATPase_AAA_core"/>
</dbReference>
<dbReference type="InterPro" id="IPR019489">
    <property type="entry name" value="Clp_ATPase_C"/>
</dbReference>
<dbReference type="InterPro" id="IPR004487">
    <property type="entry name" value="Clp_protease_ATP-bd_su_ClpX"/>
</dbReference>
<dbReference type="InterPro" id="IPR046425">
    <property type="entry name" value="ClpX_bact"/>
</dbReference>
<dbReference type="InterPro" id="IPR027417">
    <property type="entry name" value="P-loop_NTPase"/>
</dbReference>
<dbReference type="InterPro" id="IPR010603">
    <property type="entry name" value="Znf_CppX_C4"/>
</dbReference>
<dbReference type="InterPro" id="IPR038366">
    <property type="entry name" value="Znf_CppX_C4_sf"/>
</dbReference>
<dbReference type="NCBIfam" id="TIGR00382">
    <property type="entry name" value="clpX"/>
    <property type="match status" value="1"/>
</dbReference>
<dbReference type="NCBIfam" id="NF003745">
    <property type="entry name" value="PRK05342.1"/>
    <property type="match status" value="1"/>
</dbReference>
<dbReference type="PANTHER" id="PTHR48102:SF7">
    <property type="entry name" value="ATP-DEPENDENT CLP PROTEASE ATP-BINDING SUBUNIT CLPX-LIKE, MITOCHONDRIAL"/>
    <property type="match status" value="1"/>
</dbReference>
<dbReference type="PANTHER" id="PTHR48102">
    <property type="entry name" value="ATP-DEPENDENT CLP PROTEASE ATP-BINDING SUBUNIT CLPX-LIKE, MITOCHONDRIAL-RELATED"/>
    <property type="match status" value="1"/>
</dbReference>
<dbReference type="Pfam" id="PF07724">
    <property type="entry name" value="AAA_2"/>
    <property type="match status" value="1"/>
</dbReference>
<dbReference type="Pfam" id="PF10431">
    <property type="entry name" value="ClpB_D2-small"/>
    <property type="match status" value="1"/>
</dbReference>
<dbReference type="Pfam" id="PF06689">
    <property type="entry name" value="zf-C4_ClpX"/>
    <property type="match status" value="1"/>
</dbReference>
<dbReference type="SMART" id="SM00382">
    <property type="entry name" value="AAA"/>
    <property type="match status" value="1"/>
</dbReference>
<dbReference type="SMART" id="SM01086">
    <property type="entry name" value="ClpB_D2-small"/>
    <property type="match status" value="1"/>
</dbReference>
<dbReference type="SMART" id="SM00994">
    <property type="entry name" value="zf-C4_ClpX"/>
    <property type="match status" value="1"/>
</dbReference>
<dbReference type="SUPFAM" id="SSF57716">
    <property type="entry name" value="Glucocorticoid receptor-like (DNA-binding domain)"/>
    <property type="match status" value="1"/>
</dbReference>
<dbReference type="SUPFAM" id="SSF52540">
    <property type="entry name" value="P-loop containing nucleoside triphosphate hydrolases"/>
    <property type="match status" value="1"/>
</dbReference>
<dbReference type="PROSITE" id="PS51902">
    <property type="entry name" value="CLPX_ZB"/>
    <property type="match status" value="1"/>
</dbReference>
<protein>
    <recommendedName>
        <fullName evidence="1">ATP-dependent Clp protease ATP-binding subunit ClpX</fullName>
    </recommendedName>
</protein>
<reference key="1">
    <citation type="submission" date="2008-01" db="EMBL/GenBank/DDBJ databases">
        <title>Complete sequence of Pseudomonas putida GB-1.</title>
        <authorList>
            <consortium name="US DOE Joint Genome Institute"/>
            <person name="Copeland A."/>
            <person name="Lucas S."/>
            <person name="Lapidus A."/>
            <person name="Barry K."/>
            <person name="Glavina del Rio T."/>
            <person name="Dalin E."/>
            <person name="Tice H."/>
            <person name="Pitluck S."/>
            <person name="Bruce D."/>
            <person name="Goodwin L."/>
            <person name="Chertkov O."/>
            <person name="Brettin T."/>
            <person name="Detter J.C."/>
            <person name="Han C."/>
            <person name="Kuske C.R."/>
            <person name="Schmutz J."/>
            <person name="Larimer F."/>
            <person name="Land M."/>
            <person name="Hauser L."/>
            <person name="Kyrpides N."/>
            <person name="Kim E."/>
            <person name="McCarthy J.K."/>
            <person name="Richardson P."/>
        </authorList>
    </citation>
    <scope>NUCLEOTIDE SEQUENCE [LARGE SCALE GENOMIC DNA]</scope>
    <source>
        <strain>GB-1</strain>
    </source>
</reference>